<keyword id="KW-0067">ATP-binding</keyword>
<keyword id="KW-0963">Cytoplasm</keyword>
<keyword id="KW-0418">Kinase</keyword>
<keyword id="KW-0547">Nucleotide-binding</keyword>
<keyword id="KW-0808">Transferase</keyword>
<protein>
    <recommendedName>
        <fullName evidence="1">Guanylate kinase</fullName>
        <ecNumber evidence="1">2.7.4.8</ecNumber>
    </recommendedName>
    <alternativeName>
        <fullName evidence="1">GMP kinase</fullName>
    </alternativeName>
</protein>
<name>KGUA_TRIEI</name>
<dbReference type="EC" id="2.7.4.8" evidence="1"/>
<dbReference type="EMBL" id="CP000393">
    <property type="protein sequence ID" value="ABG52008.1"/>
    <property type="molecule type" value="Genomic_DNA"/>
</dbReference>
<dbReference type="RefSeq" id="WP_011612369.1">
    <property type="nucleotide sequence ID" value="NC_008312.1"/>
</dbReference>
<dbReference type="SMR" id="Q110R6"/>
<dbReference type="STRING" id="203124.Tery_2834"/>
<dbReference type="KEGG" id="ter:Tery_2834"/>
<dbReference type="eggNOG" id="COG0194">
    <property type="taxonomic scope" value="Bacteria"/>
</dbReference>
<dbReference type="HOGENOM" id="CLU_001715_1_2_3"/>
<dbReference type="OrthoDB" id="9808150at2"/>
<dbReference type="GO" id="GO:0005829">
    <property type="term" value="C:cytosol"/>
    <property type="evidence" value="ECO:0007669"/>
    <property type="project" value="TreeGrafter"/>
</dbReference>
<dbReference type="GO" id="GO:0005524">
    <property type="term" value="F:ATP binding"/>
    <property type="evidence" value="ECO:0007669"/>
    <property type="project" value="UniProtKB-UniRule"/>
</dbReference>
<dbReference type="GO" id="GO:0004385">
    <property type="term" value="F:guanylate kinase activity"/>
    <property type="evidence" value="ECO:0007669"/>
    <property type="project" value="UniProtKB-UniRule"/>
</dbReference>
<dbReference type="CDD" id="cd00071">
    <property type="entry name" value="GMPK"/>
    <property type="match status" value="1"/>
</dbReference>
<dbReference type="FunFam" id="3.30.63.10:FF:000002">
    <property type="entry name" value="Guanylate kinase 1"/>
    <property type="match status" value="1"/>
</dbReference>
<dbReference type="Gene3D" id="3.30.63.10">
    <property type="entry name" value="Guanylate Kinase phosphate binding domain"/>
    <property type="match status" value="1"/>
</dbReference>
<dbReference type="Gene3D" id="3.40.50.300">
    <property type="entry name" value="P-loop containing nucleotide triphosphate hydrolases"/>
    <property type="match status" value="1"/>
</dbReference>
<dbReference type="HAMAP" id="MF_00328">
    <property type="entry name" value="Guanylate_kinase"/>
    <property type="match status" value="1"/>
</dbReference>
<dbReference type="InterPro" id="IPR008145">
    <property type="entry name" value="GK/Ca_channel_bsu"/>
</dbReference>
<dbReference type="InterPro" id="IPR008144">
    <property type="entry name" value="Guanylate_kin-like_dom"/>
</dbReference>
<dbReference type="InterPro" id="IPR017665">
    <property type="entry name" value="Guanylate_kinase"/>
</dbReference>
<dbReference type="InterPro" id="IPR020590">
    <property type="entry name" value="Guanylate_kinase_CS"/>
</dbReference>
<dbReference type="InterPro" id="IPR027417">
    <property type="entry name" value="P-loop_NTPase"/>
</dbReference>
<dbReference type="NCBIfam" id="TIGR03263">
    <property type="entry name" value="guanyl_kin"/>
    <property type="match status" value="1"/>
</dbReference>
<dbReference type="PANTHER" id="PTHR23117:SF13">
    <property type="entry name" value="GUANYLATE KINASE"/>
    <property type="match status" value="1"/>
</dbReference>
<dbReference type="PANTHER" id="PTHR23117">
    <property type="entry name" value="GUANYLATE KINASE-RELATED"/>
    <property type="match status" value="1"/>
</dbReference>
<dbReference type="Pfam" id="PF00625">
    <property type="entry name" value="Guanylate_kin"/>
    <property type="match status" value="1"/>
</dbReference>
<dbReference type="SMART" id="SM00072">
    <property type="entry name" value="GuKc"/>
    <property type="match status" value="1"/>
</dbReference>
<dbReference type="SUPFAM" id="SSF52540">
    <property type="entry name" value="P-loop containing nucleoside triphosphate hydrolases"/>
    <property type="match status" value="1"/>
</dbReference>
<dbReference type="PROSITE" id="PS00856">
    <property type="entry name" value="GUANYLATE_KINASE_1"/>
    <property type="match status" value="1"/>
</dbReference>
<dbReference type="PROSITE" id="PS50052">
    <property type="entry name" value="GUANYLATE_KINASE_2"/>
    <property type="match status" value="1"/>
</dbReference>
<accession>Q110R6</accession>
<reference key="1">
    <citation type="journal article" date="2015" name="Proc. Natl. Acad. Sci. U.S.A.">
        <title>Trichodesmium genome maintains abundant, widespread noncoding DNA in situ, despite oligotrophic lifestyle.</title>
        <authorList>
            <person name="Walworth N."/>
            <person name="Pfreundt U."/>
            <person name="Nelson W.C."/>
            <person name="Mincer T."/>
            <person name="Heidelberg J.F."/>
            <person name="Fu F."/>
            <person name="Waterbury J.B."/>
            <person name="Glavina del Rio T."/>
            <person name="Goodwin L."/>
            <person name="Kyrpides N.C."/>
            <person name="Land M.L."/>
            <person name="Woyke T."/>
            <person name="Hutchins D.A."/>
            <person name="Hess W.R."/>
            <person name="Webb E.A."/>
        </authorList>
    </citation>
    <scope>NUCLEOTIDE SEQUENCE [LARGE SCALE GENOMIC DNA]</scope>
    <source>
        <strain>IMS101</strain>
    </source>
</reference>
<sequence length="186" mass="21177">MQTGKLIVLTGPSGVGKGTLLSCLLHRHPGLAFSVSVTTRSPRPGEVEGKSYFFVDHDQFREMIESEELLEWAEYAGNFYGTPRVPVIENIEQGRSMILEIELQGARQIQRTFPDALRIFILPPSMAELEERLWGRGQDSEEAITKRLQRATEELEAATEFDIQLVNDSIEDTLQNLDKILFHFRE</sequence>
<feature type="chain" id="PRO_0000266432" description="Guanylate kinase">
    <location>
        <begin position="1"/>
        <end position="186"/>
    </location>
</feature>
<feature type="domain" description="Guanylate kinase-like" evidence="1">
    <location>
        <begin position="4"/>
        <end position="182"/>
    </location>
</feature>
<feature type="binding site" evidence="1">
    <location>
        <begin position="11"/>
        <end position="18"/>
    </location>
    <ligand>
        <name>ATP</name>
        <dbReference type="ChEBI" id="CHEBI:30616"/>
    </ligand>
</feature>
<evidence type="ECO:0000255" key="1">
    <source>
        <dbReference type="HAMAP-Rule" id="MF_00328"/>
    </source>
</evidence>
<organism>
    <name type="scientific">Trichodesmium erythraeum (strain IMS101)</name>
    <dbReference type="NCBI Taxonomy" id="203124"/>
    <lineage>
        <taxon>Bacteria</taxon>
        <taxon>Bacillati</taxon>
        <taxon>Cyanobacteriota</taxon>
        <taxon>Cyanophyceae</taxon>
        <taxon>Oscillatoriophycideae</taxon>
        <taxon>Oscillatoriales</taxon>
        <taxon>Microcoleaceae</taxon>
        <taxon>Trichodesmium</taxon>
    </lineage>
</organism>
<proteinExistence type="inferred from homology"/>
<comment type="function">
    <text evidence="1">Essential for recycling GMP and indirectly, cGMP.</text>
</comment>
<comment type="catalytic activity">
    <reaction evidence="1">
        <text>GMP + ATP = GDP + ADP</text>
        <dbReference type="Rhea" id="RHEA:20780"/>
        <dbReference type="ChEBI" id="CHEBI:30616"/>
        <dbReference type="ChEBI" id="CHEBI:58115"/>
        <dbReference type="ChEBI" id="CHEBI:58189"/>
        <dbReference type="ChEBI" id="CHEBI:456216"/>
        <dbReference type="EC" id="2.7.4.8"/>
    </reaction>
</comment>
<comment type="subcellular location">
    <subcellularLocation>
        <location evidence="1">Cytoplasm</location>
    </subcellularLocation>
</comment>
<comment type="similarity">
    <text evidence="1">Belongs to the guanylate kinase family.</text>
</comment>
<gene>
    <name evidence="1" type="primary">gmk</name>
    <name type="ordered locus">Tery_2834</name>
</gene>